<feature type="chain" id="PRO_1000048644" description="Chromosomal replication initiator protein DnaA">
    <location>
        <begin position="1"/>
        <end position="478"/>
    </location>
</feature>
<feature type="region of interest" description="Domain I, interacts with DnaA modulators" evidence="1">
    <location>
        <begin position="1"/>
        <end position="82"/>
    </location>
</feature>
<feature type="region of interest" description="Domain II" evidence="1">
    <location>
        <begin position="82"/>
        <end position="140"/>
    </location>
</feature>
<feature type="region of interest" description="Domain III, AAA+ region" evidence="1">
    <location>
        <begin position="141"/>
        <end position="358"/>
    </location>
</feature>
<feature type="region of interest" description="Domain IV, binds dsDNA" evidence="1">
    <location>
        <begin position="359"/>
        <end position="478"/>
    </location>
</feature>
<feature type="binding site" evidence="1">
    <location>
        <position position="186"/>
    </location>
    <ligand>
        <name>ATP</name>
        <dbReference type="ChEBI" id="CHEBI:30616"/>
    </ligand>
</feature>
<feature type="binding site" evidence="1">
    <location>
        <position position="188"/>
    </location>
    <ligand>
        <name>ATP</name>
        <dbReference type="ChEBI" id="CHEBI:30616"/>
    </ligand>
</feature>
<feature type="binding site" evidence="1">
    <location>
        <position position="189"/>
    </location>
    <ligand>
        <name>ATP</name>
        <dbReference type="ChEBI" id="CHEBI:30616"/>
    </ligand>
</feature>
<feature type="binding site" evidence="1">
    <location>
        <position position="190"/>
    </location>
    <ligand>
        <name>ATP</name>
        <dbReference type="ChEBI" id="CHEBI:30616"/>
    </ligand>
</feature>
<dbReference type="EMBL" id="AM398681">
    <property type="protein sequence ID" value="CAL43291.1"/>
    <property type="molecule type" value="Genomic_DNA"/>
</dbReference>
<dbReference type="RefSeq" id="YP_001296102.1">
    <property type="nucleotide sequence ID" value="NC_009613.3"/>
</dbReference>
<dbReference type="SMR" id="A6GYW8"/>
<dbReference type="STRING" id="402612.FP1208"/>
<dbReference type="EnsemblBacteria" id="CAL43291">
    <property type="protein sequence ID" value="CAL43291"/>
    <property type="gene ID" value="FP1208"/>
</dbReference>
<dbReference type="KEGG" id="fps:FP1208"/>
<dbReference type="PATRIC" id="fig|402612.5.peg.1222"/>
<dbReference type="eggNOG" id="COG0593">
    <property type="taxonomic scope" value="Bacteria"/>
</dbReference>
<dbReference type="HOGENOM" id="CLU_026910_3_0_10"/>
<dbReference type="OrthoDB" id="9807019at2"/>
<dbReference type="Proteomes" id="UP000006394">
    <property type="component" value="Chromosome"/>
</dbReference>
<dbReference type="GO" id="GO:0005737">
    <property type="term" value="C:cytoplasm"/>
    <property type="evidence" value="ECO:0007669"/>
    <property type="project" value="UniProtKB-SubCell"/>
</dbReference>
<dbReference type="GO" id="GO:0005886">
    <property type="term" value="C:plasma membrane"/>
    <property type="evidence" value="ECO:0007669"/>
    <property type="project" value="TreeGrafter"/>
</dbReference>
<dbReference type="GO" id="GO:0005524">
    <property type="term" value="F:ATP binding"/>
    <property type="evidence" value="ECO:0007669"/>
    <property type="project" value="UniProtKB-UniRule"/>
</dbReference>
<dbReference type="GO" id="GO:0016887">
    <property type="term" value="F:ATP hydrolysis activity"/>
    <property type="evidence" value="ECO:0007669"/>
    <property type="project" value="InterPro"/>
</dbReference>
<dbReference type="GO" id="GO:0003688">
    <property type="term" value="F:DNA replication origin binding"/>
    <property type="evidence" value="ECO:0007669"/>
    <property type="project" value="UniProtKB-UniRule"/>
</dbReference>
<dbReference type="GO" id="GO:0008289">
    <property type="term" value="F:lipid binding"/>
    <property type="evidence" value="ECO:0007669"/>
    <property type="project" value="UniProtKB-KW"/>
</dbReference>
<dbReference type="GO" id="GO:0006270">
    <property type="term" value="P:DNA replication initiation"/>
    <property type="evidence" value="ECO:0007669"/>
    <property type="project" value="UniProtKB-UniRule"/>
</dbReference>
<dbReference type="GO" id="GO:0006275">
    <property type="term" value="P:regulation of DNA replication"/>
    <property type="evidence" value="ECO:0007669"/>
    <property type="project" value="UniProtKB-UniRule"/>
</dbReference>
<dbReference type="CDD" id="cd00009">
    <property type="entry name" value="AAA"/>
    <property type="match status" value="1"/>
</dbReference>
<dbReference type="CDD" id="cd06571">
    <property type="entry name" value="Bac_DnaA_C"/>
    <property type="match status" value="1"/>
</dbReference>
<dbReference type="FunFam" id="3.40.50.300:FF:000668">
    <property type="entry name" value="Chromosomal replication initiator protein DnaA"/>
    <property type="match status" value="1"/>
</dbReference>
<dbReference type="Gene3D" id="1.10.1750.10">
    <property type="match status" value="1"/>
</dbReference>
<dbReference type="Gene3D" id="1.10.8.60">
    <property type="match status" value="1"/>
</dbReference>
<dbReference type="Gene3D" id="3.30.300.180">
    <property type="match status" value="1"/>
</dbReference>
<dbReference type="Gene3D" id="3.40.50.300">
    <property type="entry name" value="P-loop containing nucleotide triphosphate hydrolases"/>
    <property type="match status" value="1"/>
</dbReference>
<dbReference type="HAMAP" id="MF_00377">
    <property type="entry name" value="DnaA_bact"/>
    <property type="match status" value="1"/>
</dbReference>
<dbReference type="InterPro" id="IPR003593">
    <property type="entry name" value="AAA+_ATPase"/>
</dbReference>
<dbReference type="InterPro" id="IPR001957">
    <property type="entry name" value="Chromosome_initiator_DnaA"/>
</dbReference>
<dbReference type="InterPro" id="IPR020591">
    <property type="entry name" value="Chromosome_initiator_DnaA-like"/>
</dbReference>
<dbReference type="InterPro" id="IPR018312">
    <property type="entry name" value="Chromosome_initiator_DnaA_CS"/>
</dbReference>
<dbReference type="InterPro" id="IPR013159">
    <property type="entry name" value="DnaA_C"/>
</dbReference>
<dbReference type="InterPro" id="IPR013317">
    <property type="entry name" value="DnaA_dom"/>
</dbReference>
<dbReference type="InterPro" id="IPR024633">
    <property type="entry name" value="DnaA_N_dom"/>
</dbReference>
<dbReference type="InterPro" id="IPR038454">
    <property type="entry name" value="DnaA_N_sf"/>
</dbReference>
<dbReference type="InterPro" id="IPR027417">
    <property type="entry name" value="P-loop_NTPase"/>
</dbReference>
<dbReference type="InterPro" id="IPR010921">
    <property type="entry name" value="Trp_repressor/repl_initiator"/>
</dbReference>
<dbReference type="NCBIfam" id="TIGR00362">
    <property type="entry name" value="DnaA"/>
    <property type="match status" value="1"/>
</dbReference>
<dbReference type="PANTHER" id="PTHR30050">
    <property type="entry name" value="CHROMOSOMAL REPLICATION INITIATOR PROTEIN DNAA"/>
    <property type="match status" value="1"/>
</dbReference>
<dbReference type="PANTHER" id="PTHR30050:SF2">
    <property type="entry name" value="CHROMOSOMAL REPLICATION INITIATOR PROTEIN DNAA"/>
    <property type="match status" value="1"/>
</dbReference>
<dbReference type="Pfam" id="PF00308">
    <property type="entry name" value="Bac_DnaA"/>
    <property type="match status" value="1"/>
</dbReference>
<dbReference type="Pfam" id="PF08299">
    <property type="entry name" value="Bac_DnaA_C"/>
    <property type="match status" value="1"/>
</dbReference>
<dbReference type="Pfam" id="PF11638">
    <property type="entry name" value="DnaA_N"/>
    <property type="match status" value="1"/>
</dbReference>
<dbReference type="PRINTS" id="PR00051">
    <property type="entry name" value="DNAA"/>
</dbReference>
<dbReference type="SMART" id="SM00382">
    <property type="entry name" value="AAA"/>
    <property type="match status" value="1"/>
</dbReference>
<dbReference type="SMART" id="SM00760">
    <property type="entry name" value="Bac_DnaA_C"/>
    <property type="match status" value="1"/>
</dbReference>
<dbReference type="SUPFAM" id="SSF52540">
    <property type="entry name" value="P-loop containing nucleoside triphosphate hydrolases"/>
    <property type="match status" value="1"/>
</dbReference>
<dbReference type="SUPFAM" id="SSF48295">
    <property type="entry name" value="TrpR-like"/>
    <property type="match status" value="1"/>
</dbReference>
<dbReference type="PROSITE" id="PS01008">
    <property type="entry name" value="DNAA"/>
    <property type="match status" value="1"/>
</dbReference>
<protein>
    <recommendedName>
        <fullName evidence="1">Chromosomal replication initiator protein DnaA</fullName>
    </recommendedName>
</protein>
<gene>
    <name evidence="1" type="primary">dnaA</name>
    <name type="ordered locus">FP1208</name>
</gene>
<evidence type="ECO:0000255" key="1">
    <source>
        <dbReference type="HAMAP-Rule" id="MF_00377"/>
    </source>
</evidence>
<keyword id="KW-0067">ATP-binding</keyword>
<keyword id="KW-0963">Cytoplasm</keyword>
<keyword id="KW-0235">DNA replication</keyword>
<keyword id="KW-0238">DNA-binding</keyword>
<keyword id="KW-0446">Lipid-binding</keyword>
<keyword id="KW-0547">Nucleotide-binding</keyword>
<keyword id="KW-1185">Reference proteome</keyword>
<reference key="1">
    <citation type="journal article" date="2007" name="Nat. Biotechnol.">
        <title>Complete genome sequence of the fish pathogen Flavobacterium psychrophilum.</title>
        <authorList>
            <person name="Duchaud E."/>
            <person name="Boussaha M."/>
            <person name="Loux V."/>
            <person name="Bernardet J.-F."/>
            <person name="Michel C."/>
            <person name="Kerouault B."/>
            <person name="Mondot S."/>
            <person name="Nicolas P."/>
            <person name="Bossy R."/>
            <person name="Caron C."/>
            <person name="Bessieres P."/>
            <person name="Gibrat J.-F."/>
            <person name="Claverol S."/>
            <person name="Dumetz F."/>
            <person name="Le Henaff M."/>
            <person name="Benmansour A."/>
        </authorList>
    </citation>
    <scope>NUCLEOTIDE SEQUENCE [LARGE SCALE GENOMIC DNA]</scope>
    <source>
        <strain>ATCC 49511 / DSM 21280 / CIP 103535 / JIP02/86</strain>
    </source>
</reference>
<sequence>MHTMNKTAESVWDNCLSFIKDNIQEQAYKTWFEPIKSVELTDNALYIQVPSKFFYEWLEEHYVKLLKVALTKELGKNAKLLYKIKMENTYGNKLPFTEQLPSAHRSPVRTQEIDVPVQQKNPELRNPFIIPGIRNLKIESQLNANYSFDNFLEGDSNRLARSAGMAVANKPGGTSFNPLLIFGGVGLGKTHLAHAIGVEVKEKYPEKTVLYISAEIFTQQYIESVKKNNRNDFIHFYQLIDVLIIDDVQFLSGKTGTQDVFFHIFNYLHQNGKQVILTSDKAPVDMQDIEQRLLSRFKWGLSAEIHQPDYETRISILKNILYRDGVEMPEEIIEYVARNIKSNVRELEGAIISLIAQSSFNKKEVTLELAKQVVEKFVKNVKREVSIDYIQKVVSDYFQLDLEVLQSKTRKRHVVQARQLAMFFAKRYTKASLANIGSQIGDRDHATVLHACKTVDNLVTTDKQFKKFVDDINKKLSL</sequence>
<name>DNAA_FLAPJ</name>
<organism>
    <name type="scientific">Flavobacterium psychrophilum (strain ATCC 49511 / DSM 21280 / CIP 103535 / JIP02/86)</name>
    <dbReference type="NCBI Taxonomy" id="402612"/>
    <lineage>
        <taxon>Bacteria</taxon>
        <taxon>Pseudomonadati</taxon>
        <taxon>Bacteroidota</taxon>
        <taxon>Flavobacteriia</taxon>
        <taxon>Flavobacteriales</taxon>
        <taxon>Flavobacteriaceae</taxon>
        <taxon>Flavobacterium</taxon>
    </lineage>
</organism>
<proteinExistence type="inferred from homology"/>
<accession>A6GYW8</accession>
<comment type="function">
    <text evidence="1">Plays an essential role in the initiation and regulation of chromosomal replication. ATP-DnaA binds to the origin of replication (oriC) to initiate formation of the DNA replication initiation complex once per cell cycle. Binds the DnaA box (a 9 base pair repeat at the origin) and separates the double-stranded (ds)DNA. Forms a right-handed helical filament on oriC DNA; dsDNA binds to the exterior of the filament while single-stranded (ss)DNA is stabiized in the filament's interior. The ATP-DnaA-oriC complex binds and stabilizes one strand of the AT-rich DNA unwinding element (DUE), permitting loading of DNA polymerase. After initiation quickly degrades to an ADP-DnaA complex that is not apt for DNA replication. Binds acidic phospholipids.</text>
</comment>
<comment type="subunit">
    <text evidence="1">Oligomerizes as a right-handed, spiral filament on DNA at oriC.</text>
</comment>
<comment type="subcellular location">
    <subcellularLocation>
        <location evidence="1">Cytoplasm</location>
    </subcellularLocation>
</comment>
<comment type="domain">
    <text evidence="1">Domain I is involved in oligomerization and binding regulators, domain II is flexibile and of varying length in different bacteria, domain III forms the AAA+ region, while domain IV binds dsDNA.</text>
</comment>
<comment type="similarity">
    <text evidence="1">Belongs to the DnaA family.</text>
</comment>